<proteinExistence type="inferred from homology"/>
<protein>
    <recommendedName>
        <fullName evidence="1">Elongation factor 4</fullName>
        <shortName evidence="1">EF-4</shortName>
        <ecNumber evidence="1">3.6.5.n1</ecNumber>
    </recommendedName>
    <alternativeName>
        <fullName evidence="1">Ribosomal back-translocase LepA</fullName>
    </alternativeName>
</protein>
<evidence type="ECO:0000255" key="1">
    <source>
        <dbReference type="HAMAP-Rule" id="MF_00071"/>
    </source>
</evidence>
<reference key="1">
    <citation type="journal article" date="2005" name="Nat. Biotechnol.">
        <title>Genome sequence of the chlorinated compound-respiring bacterium Dehalococcoides species strain CBDB1.</title>
        <authorList>
            <person name="Kube M."/>
            <person name="Beck A."/>
            <person name="Zinder S.H."/>
            <person name="Kuhl H."/>
            <person name="Reinhardt R."/>
            <person name="Adrian L."/>
        </authorList>
    </citation>
    <scope>NUCLEOTIDE SEQUENCE [LARGE SCALE GENOMIC DNA]</scope>
    <source>
        <strain>CBDB1</strain>
    </source>
</reference>
<gene>
    <name evidence="1" type="primary">lepA</name>
    <name type="ordered locus">cbdbA841</name>
</gene>
<feature type="chain" id="PRO_0000224757" description="Elongation factor 4">
    <location>
        <begin position="1"/>
        <end position="605"/>
    </location>
</feature>
<feature type="domain" description="tr-type G">
    <location>
        <begin position="4"/>
        <end position="186"/>
    </location>
</feature>
<feature type="binding site" evidence="1">
    <location>
        <begin position="16"/>
        <end position="21"/>
    </location>
    <ligand>
        <name>GTP</name>
        <dbReference type="ChEBI" id="CHEBI:37565"/>
    </ligand>
</feature>
<feature type="binding site" evidence="1">
    <location>
        <begin position="133"/>
        <end position="136"/>
    </location>
    <ligand>
        <name>GTP</name>
        <dbReference type="ChEBI" id="CHEBI:37565"/>
    </ligand>
</feature>
<sequence length="605" mass="67084">MSQSSVRNFCIIAHIDHGKSTLADRLIEMTGTLRHDEMCEQVMDSMELERERGITIKAKAIRLRYISKDKQEYRLNLIDTPGHVDFSYEVSRTIAACEGAILVIDATQGIQAQTLANVYLAIEYNLEIIPVINKIDLPGADIPRVMGEIKSVLGYDEDSVLQISAKLGLGVPELLEAIVNKVPAPKGNANQPLRALIFDSHYDPYKGVVAYLRVADGNINKGDDLRLMGQGTEFRVLEAGYFAPAQVAALRLDVGDVGYIATGLKSVGECRVGDTVTLQHGGAIQPLIGYHPAKAMVFAGIYPTQTDDYHELREAMEKLSLNDASLSSEPESSPLLGHGFRCGFLGLLHLDIIVERLEREFNLSLVVTSPGVSLTVTRIGGEAFTVVNPNEMPLPHEIARIEEPWVSVVIITPSKYIGTVMDLVRENYGVYKNTEYLGQLAMSELGQRVQLHYDMPLRSILTTFHDQLKSRTQGYASLDYEFIGYRDANLSKIDVLVNDVPVDAFSRIIPPDKAHEIGEALVKKLKEMIPRQLYQVTLQAAIGSKIVARADISAKRKDVIAKCYGGDITRKRKLLDKQKEGKKKMRQIGKVEVPKEAFLSVLKLQ</sequence>
<name>LEPA_DEHMC</name>
<organism>
    <name type="scientific">Dehalococcoides mccartyi (strain CBDB1)</name>
    <dbReference type="NCBI Taxonomy" id="255470"/>
    <lineage>
        <taxon>Bacteria</taxon>
        <taxon>Bacillati</taxon>
        <taxon>Chloroflexota</taxon>
        <taxon>Dehalococcoidia</taxon>
        <taxon>Dehalococcoidales</taxon>
        <taxon>Dehalococcoidaceae</taxon>
        <taxon>Dehalococcoides</taxon>
    </lineage>
</organism>
<accession>Q3ZXK4</accession>
<dbReference type="EC" id="3.6.5.n1" evidence="1"/>
<dbReference type="EMBL" id="AJ965256">
    <property type="protein sequence ID" value="CAI82984.1"/>
    <property type="molecule type" value="Genomic_DNA"/>
</dbReference>
<dbReference type="RefSeq" id="WP_011309335.1">
    <property type="nucleotide sequence ID" value="NC_007356.1"/>
</dbReference>
<dbReference type="SMR" id="Q3ZXK4"/>
<dbReference type="KEGG" id="deh:cbdbA841"/>
<dbReference type="HOGENOM" id="CLU_009995_3_3_0"/>
<dbReference type="Proteomes" id="UP000000433">
    <property type="component" value="Chromosome"/>
</dbReference>
<dbReference type="GO" id="GO:0005886">
    <property type="term" value="C:plasma membrane"/>
    <property type="evidence" value="ECO:0007669"/>
    <property type="project" value="UniProtKB-SubCell"/>
</dbReference>
<dbReference type="GO" id="GO:0005525">
    <property type="term" value="F:GTP binding"/>
    <property type="evidence" value="ECO:0007669"/>
    <property type="project" value="UniProtKB-UniRule"/>
</dbReference>
<dbReference type="GO" id="GO:0003924">
    <property type="term" value="F:GTPase activity"/>
    <property type="evidence" value="ECO:0007669"/>
    <property type="project" value="UniProtKB-UniRule"/>
</dbReference>
<dbReference type="GO" id="GO:0043022">
    <property type="term" value="F:ribosome binding"/>
    <property type="evidence" value="ECO:0007669"/>
    <property type="project" value="UniProtKB-UniRule"/>
</dbReference>
<dbReference type="GO" id="GO:0003746">
    <property type="term" value="F:translation elongation factor activity"/>
    <property type="evidence" value="ECO:0007669"/>
    <property type="project" value="UniProtKB-UniRule"/>
</dbReference>
<dbReference type="GO" id="GO:0045727">
    <property type="term" value="P:positive regulation of translation"/>
    <property type="evidence" value="ECO:0007669"/>
    <property type="project" value="UniProtKB-UniRule"/>
</dbReference>
<dbReference type="CDD" id="cd03699">
    <property type="entry name" value="EF4_II"/>
    <property type="match status" value="1"/>
</dbReference>
<dbReference type="CDD" id="cd01890">
    <property type="entry name" value="LepA"/>
    <property type="match status" value="1"/>
</dbReference>
<dbReference type="CDD" id="cd03709">
    <property type="entry name" value="lepA_C"/>
    <property type="match status" value="1"/>
</dbReference>
<dbReference type="FunFam" id="3.40.50.300:FF:000078">
    <property type="entry name" value="Elongation factor 4"/>
    <property type="match status" value="1"/>
</dbReference>
<dbReference type="FunFam" id="2.40.30.10:FF:000015">
    <property type="entry name" value="Translation factor GUF1, mitochondrial"/>
    <property type="match status" value="1"/>
</dbReference>
<dbReference type="FunFam" id="3.30.70.2570:FF:000001">
    <property type="entry name" value="Translation factor GUF1, mitochondrial"/>
    <property type="match status" value="1"/>
</dbReference>
<dbReference type="FunFam" id="3.30.70.870:FF:000004">
    <property type="entry name" value="Translation factor GUF1, mitochondrial"/>
    <property type="match status" value="1"/>
</dbReference>
<dbReference type="Gene3D" id="3.30.70.240">
    <property type="match status" value="1"/>
</dbReference>
<dbReference type="Gene3D" id="3.30.70.2570">
    <property type="entry name" value="Elongation factor 4, C-terminal domain"/>
    <property type="match status" value="1"/>
</dbReference>
<dbReference type="Gene3D" id="3.30.70.870">
    <property type="entry name" value="Elongation Factor G (Translational Gtpase), domain 3"/>
    <property type="match status" value="1"/>
</dbReference>
<dbReference type="Gene3D" id="3.40.50.300">
    <property type="entry name" value="P-loop containing nucleotide triphosphate hydrolases"/>
    <property type="match status" value="1"/>
</dbReference>
<dbReference type="Gene3D" id="2.40.30.10">
    <property type="entry name" value="Translation factors"/>
    <property type="match status" value="1"/>
</dbReference>
<dbReference type="HAMAP" id="MF_00071">
    <property type="entry name" value="LepA"/>
    <property type="match status" value="1"/>
</dbReference>
<dbReference type="InterPro" id="IPR006297">
    <property type="entry name" value="EF-4"/>
</dbReference>
<dbReference type="InterPro" id="IPR035647">
    <property type="entry name" value="EFG_III/V"/>
</dbReference>
<dbReference type="InterPro" id="IPR000640">
    <property type="entry name" value="EFG_V-like"/>
</dbReference>
<dbReference type="InterPro" id="IPR031157">
    <property type="entry name" value="G_TR_CS"/>
</dbReference>
<dbReference type="InterPro" id="IPR038363">
    <property type="entry name" value="LepA_C_sf"/>
</dbReference>
<dbReference type="InterPro" id="IPR013842">
    <property type="entry name" value="LepA_CTD"/>
</dbReference>
<dbReference type="InterPro" id="IPR035654">
    <property type="entry name" value="LepA_IV"/>
</dbReference>
<dbReference type="InterPro" id="IPR027417">
    <property type="entry name" value="P-loop_NTPase"/>
</dbReference>
<dbReference type="InterPro" id="IPR005225">
    <property type="entry name" value="Small_GTP-bd"/>
</dbReference>
<dbReference type="InterPro" id="IPR000795">
    <property type="entry name" value="T_Tr_GTP-bd_dom"/>
</dbReference>
<dbReference type="InterPro" id="IPR009000">
    <property type="entry name" value="Transl_B-barrel_sf"/>
</dbReference>
<dbReference type="NCBIfam" id="TIGR01393">
    <property type="entry name" value="lepA"/>
    <property type="match status" value="1"/>
</dbReference>
<dbReference type="NCBIfam" id="TIGR00231">
    <property type="entry name" value="small_GTP"/>
    <property type="match status" value="1"/>
</dbReference>
<dbReference type="PANTHER" id="PTHR43512:SF4">
    <property type="entry name" value="TRANSLATION FACTOR GUF1 HOMOLOG, CHLOROPLASTIC"/>
    <property type="match status" value="1"/>
</dbReference>
<dbReference type="PANTHER" id="PTHR43512">
    <property type="entry name" value="TRANSLATION FACTOR GUF1-RELATED"/>
    <property type="match status" value="1"/>
</dbReference>
<dbReference type="Pfam" id="PF00679">
    <property type="entry name" value="EFG_C"/>
    <property type="match status" value="1"/>
</dbReference>
<dbReference type="Pfam" id="PF00009">
    <property type="entry name" value="GTP_EFTU"/>
    <property type="match status" value="1"/>
</dbReference>
<dbReference type="Pfam" id="PF06421">
    <property type="entry name" value="LepA_C"/>
    <property type="match status" value="1"/>
</dbReference>
<dbReference type="PRINTS" id="PR00315">
    <property type="entry name" value="ELONGATNFCT"/>
</dbReference>
<dbReference type="SUPFAM" id="SSF54980">
    <property type="entry name" value="EF-G C-terminal domain-like"/>
    <property type="match status" value="2"/>
</dbReference>
<dbReference type="SUPFAM" id="SSF52540">
    <property type="entry name" value="P-loop containing nucleoside triphosphate hydrolases"/>
    <property type="match status" value="1"/>
</dbReference>
<dbReference type="SUPFAM" id="SSF50447">
    <property type="entry name" value="Translation proteins"/>
    <property type="match status" value="1"/>
</dbReference>
<dbReference type="PROSITE" id="PS00301">
    <property type="entry name" value="G_TR_1"/>
    <property type="match status" value="1"/>
</dbReference>
<dbReference type="PROSITE" id="PS51722">
    <property type="entry name" value="G_TR_2"/>
    <property type="match status" value="1"/>
</dbReference>
<keyword id="KW-1003">Cell membrane</keyword>
<keyword id="KW-0342">GTP-binding</keyword>
<keyword id="KW-0378">Hydrolase</keyword>
<keyword id="KW-0472">Membrane</keyword>
<keyword id="KW-0547">Nucleotide-binding</keyword>
<keyword id="KW-0648">Protein biosynthesis</keyword>
<comment type="function">
    <text evidence="1">Required for accurate and efficient protein synthesis under certain stress conditions. May act as a fidelity factor of the translation reaction, by catalyzing a one-codon backward translocation of tRNAs on improperly translocated ribosomes. Back-translocation proceeds from a post-translocation (POST) complex to a pre-translocation (PRE) complex, thus giving elongation factor G a second chance to translocate the tRNAs correctly. Binds to ribosomes in a GTP-dependent manner.</text>
</comment>
<comment type="catalytic activity">
    <reaction evidence="1">
        <text>GTP + H2O = GDP + phosphate + H(+)</text>
        <dbReference type="Rhea" id="RHEA:19669"/>
        <dbReference type="ChEBI" id="CHEBI:15377"/>
        <dbReference type="ChEBI" id="CHEBI:15378"/>
        <dbReference type="ChEBI" id="CHEBI:37565"/>
        <dbReference type="ChEBI" id="CHEBI:43474"/>
        <dbReference type="ChEBI" id="CHEBI:58189"/>
        <dbReference type="EC" id="3.6.5.n1"/>
    </reaction>
</comment>
<comment type="subcellular location">
    <subcellularLocation>
        <location evidence="1">Cell membrane</location>
        <topology evidence="1">Peripheral membrane protein</topology>
        <orientation evidence="1">Cytoplasmic side</orientation>
    </subcellularLocation>
</comment>
<comment type="similarity">
    <text evidence="1">Belongs to the TRAFAC class translation factor GTPase superfamily. Classic translation factor GTPase family. LepA subfamily.</text>
</comment>